<organism>
    <name type="scientific">Salmonella paratyphi A (strain AKU_12601)</name>
    <dbReference type="NCBI Taxonomy" id="554290"/>
    <lineage>
        <taxon>Bacteria</taxon>
        <taxon>Pseudomonadati</taxon>
        <taxon>Pseudomonadota</taxon>
        <taxon>Gammaproteobacteria</taxon>
        <taxon>Enterobacterales</taxon>
        <taxon>Enterobacteriaceae</taxon>
        <taxon>Salmonella</taxon>
    </lineage>
</organism>
<evidence type="ECO:0000255" key="1">
    <source>
        <dbReference type="HAMAP-Rule" id="MF_01261"/>
    </source>
</evidence>
<reference key="1">
    <citation type="journal article" date="2009" name="BMC Genomics">
        <title>Pseudogene accumulation in the evolutionary histories of Salmonella enterica serovars Paratyphi A and Typhi.</title>
        <authorList>
            <person name="Holt K.E."/>
            <person name="Thomson N.R."/>
            <person name="Wain J."/>
            <person name="Langridge G.C."/>
            <person name="Hasan R."/>
            <person name="Bhutta Z.A."/>
            <person name="Quail M.A."/>
            <person name="Norbertczak H."/>
            <person name="Walker D."/>
            <person name="Simmonds M."/>
            <person name="White B."/>
            <person name="Bason N."/>
            <person name="Mungall K."/>
            <person name="Dougan G."/>
            <person name="Parkhill J."/>
        </authorList>
    </citation>
    <scope>NUCLEOTIDE SEQUENCE [LARGE SCALE GENOMIC DNA]</scope>
    <source>
        <strain>AKU_12601</strain>
    </source>
</reference>
<dbReference type="EC" id="2.7.7.72" evidence="1"/>
<dbReference type="EC" id="3.1.3.-" evidence="1"/>
<dbReference type="EC" id="3.1.4.-" evidence="1"/>
<dbReference type="EMBL" id="FM200053">
    <property type="protein sequence ID" value="CAR61115.1"/>
    <property type="molecule type" value="Genomic_DNA"/>
</dbReference>
<dbReference type="RefSeq" id="WP_000708461.1">
    <property type="nucleotide sequence ID" value="NC_011147.1"/>
</dbReference>
<dbReference type="SMR" id="B5BG15"/>
<dbReference type="KEGG" id="sek:SSPA2868"/>
<dbReference type="HOGENOM" id="CLU_015961_1_1_6"/>
<dbReference type="Proteomes" id="UP000001869">
    <property type="component" value="Chromosome"/>
</dbReference>
<dbReference type="GO" id="GO:0005524">
    <property type="term" value="F:ATP binding"/>
    <property type="evidence" value="ECO:0007669"/>
    <property type="project" value="UniProtKB-UniRule"/>
</dbReference>
<dbReference type="GO" id="GO:0004810">
    <property type="term" value="F:CCA tRNA nucleotidyltransferase activity"/>
    <property type="evidence" value="ECO:0007669"/>
    <property type="project" value="UniProtKB-UniRule"/>
</dbReference>
<dbReference type="GO" id="GO:0004112">
    <property type="term" value="F:cyclic-nucleotide phosphodiesterase activity"/>
    <property type="evidence" value="ECO:0007669"/>
    <property type="project" value="UniProtKB-UniRule"/>
</dbReference>
<dbReference type="GO" id="GO:0000287">
    <property type="term" value="F:magnesium ion binding"/>
    <property type="evidence" value="ECO:0007669"/>
    <property type="project" value="UniProtKB-UniRule"/>
</dbReference>
<dbReference type="GO" id="GO:0016791">
    <property type="term" value="F:phosphatase activity"/>
    <property type="evidence" value="ECO:0007669"/>
    <property type="project" value="UniProtKB-UniRule"/>
</dbReference>
<dbReference type="GO" id="GO:0000049">
    <property type="term" value="F:tRNA binding"/>
    <property type="evidence" value="ECO:0007669"/>
    <property type="project" value="UniProtKB-UniRule"/>
</dbReference>
<dbReference type="GO" id="GO:0042245">
    <property type="term" value="P:RNA repair"/>
    <property type="evidence" value="ECO:0007669"/>
    <property type="project" value="UniProtKB-KW"/>
</dbReference>
<dbReference type="GO" id="GO:0001680">
    <property type="term" value="P:tRNA 3'-terminal CCA addition"/>
    <property type="evidence" value="ECO:0007669"/>
    <property type="project" value="UniProtKB-UniRule"/>
</dbReference>
<dbReference type="CDD" id="cd00077">
    <property type="entry name" value="HDc"/>
    <property type="match status" value="1"/>
</dbReference>
<dbReference type="CDD" id="cd05398">
    <property type="entry name" value="NT_ClassII-CCAase"/>
    <property type="match status" value="1"/>
</dbReference>
<dbReference type="FunFam" id="1.10.3090.10:FF:000001">
    <property type="entry name" value="Multifunctional CCA protein"/>
    <property type="match status" value="1"/>
</dbReference>
<dbReference type="FunFam" id="3.30.460.10:FF:000016">
    <property type="entry name" value="Multifunctional CCA protein"/>
    <property type="match status" value="1"/>
</dbReference>
<dbReference type="Gene3D" id="3.30.460.10">
    <property type="entry name" value="Beta Polymerase, domain 2"/>
    <property type="match status" value="1"/>
</dbReference>
<dbReference type="Gene3D" id="1.10.3090.10">
    <property type="entry name" value="cca-adding enzyme, domain 2"/>
    <property type="match status" value="1"/>
</dbReference>
<dbReference type="HAMAP" id="MF_01261">
    <property type="entry name" value="CCA_bact_type1"/>
    <property type="match status" value="1"/>
</dbReference>
<dbReference type="HAMAP" id="MF_01262">
    <property type="entry name" value="CCA_bact_type2"/>
    <property type="match status" value="1"/>
</dbReference>
<dbReference type="InterPro" id="IPR012006">
    <property type="entry name" value="CCA_bact"/>
</dbReference>
<dbReference type="InterPro" id="IPR003607">
    <property type="entry name" value="HD/PDEase_dom"/>
</dbReference>
<dbReference type="InterPro" id="IPR006674">
    <property type="entry name" value="HD_domain"/>
</dbReference>
<dbReference type="InterPro" id="IPR043519">
    <property type="entry name" value="NT_sf"/>
</dbReference>
<dbReference type="InterPro" id="IPR002646">
    <property type="entry name" value="PolA_pol_head_dom"/>
</dbReference>
<dbReference type="InterPro" id="IPR032828">
    <property type="entry name" value="PolyA_RNA-bd"/>
</dbReference>
<dbReference type="InterPro" id="IPR050124">
    <property type="entry name" value="tRNA_CCA-adding_enzyme"/>
</dbReference>
<dbReference type="NCBIfam" id="NF008137">
    <property type="entry name" value="PRK10885.1"/>
    <property type="match status" value="1"/>
</dbReference>
<dbReference type="PANTHER" id="PTHR47545">
    <property type="entry name" value="MULTIFUNCTIONAL CCA PROTEIN"/>
    <property type="match status" value="1"/>
</dbReference>
<dbReference type="PANTHER" id="PTHR47545:SF1">
    <property type="entry name" value="MULTIFUNCTIONAL CCA PROTEIN"/>
    <property type="match status" value="1"/>
</dbReference>
<dbReference type="Pfam" id="PF01966">
    <property type="entry name" value="HD"/>
    <property type="match status" value="1"/>
</dbReference>
<dbReference type="Pfam" id="PF01743">
    <property type="entry name" value="PolyA_pol"/>
    <property type="match status" value="1"/>
</dbReference>
<dbReference type="Pfam" id="PF12627">
    <property type="entry name" value="PolyA_pol_RNAbd"/>
    <property type="match status" value="1"/>
</dbReference>
<dbReference type="PIRSF" id="PIRSF000813">
    <property type="entry name" value="CCA_bact"/>
    <property type="match status" value="1"/>
</dbReference>
<dbReference type="SMART" id="SM00471">
    <property type="entry name" value="HDc"/>
    <property type="match status" value="1"/>
</dbReference>
<dbReference type="SUPFAM" id="SSF81301">
    <property type="entry name" value="Nucleotidyltransferase"/>
    <property type="match status" value="1"/>
</dbReference>
<dbReference type="SUPFAM" id="SSF81891">
    <property type="entry name" value="Poly A polymerase C-terminal region-like"/>
    <property type="match status" value="1"/>
</dbReference>
<dbReference type="PROSITE" id="PS51831">
    <property type="entry name" value="HD"/>
    <property type="match status" value="1"/>
</dbReference>
<comment type="function">
    <text evidence="1">Catalyzes the addition and repair of the essential 3'-terminal CCA sequence in tRNAs without using a nucleic acid template. Adds these three nucleotides in the order of C, C, and A to the tRNA nucleotide-73, using CTP and ATP as substrates and producing inorganic pyrophosphate. tRNA 3'-terminal CCA addition is required both for tRNA processing and repair. Also involved in tRNA surveillance by mediating tandem CCA addition to generate a CCACCA at the 3' terminus of unstable tRNAs. While stable tRNAs receive only 3'-terminal CCA, unstable tRNAs are marked with CCACCA and rapidly degraded.</text>
</comment>
<comment type="catalytic activity">
    <reaction evidence="1">
        <text>a tRNA precursor + 2 CTP + ATP = a tRNA with a 3' CCA end + 3 diphosphate</text>
        <dbReference type="Rhea" id="RHEA:14433"/>
        <dbReference type="Rhea" id="RHEA-COMP:10465"/>
        <dbReference type="Rhea" id="RHEA-COMP:10468"/>
        <dbReference type="ChEBI" id="CHEBI:30616"/>
        <dbReference type="ChEBI" id="CHEBI:33019"/>
        <dbReference type="ChEBI" id="CHEBI:37563"/>
        <dbReference type="ChEBI" id="CHEBI:74896"/>
        <dbReference type="ChEBI" id="CHEBI:83071"/>
        <dbReference type="EC" id="2.7.7.72"/>
    </reaction>
</comment>
<comment type="catalytic activity">
    <reaction evidence="1">
        <text>a tRNA with a 3' CCA end + 2 CTP + ATP = a tRNA with a 3' CCACCA end + 3 diphosphate</text>
        <dbReference type="Rhea" id="RHEA:76235"/>
        <dbReference type="Rhea" id="RHEA-COMP:10468"/>
        <dbReference type="Rhea" id="RHEA-COMP:18655"/>
        <dbReference type="ChEBI" id="CHEBI:30616"/>
        <dbReference type="ChEBI" id="CHEBI:33019"/>
        <dbReference type="ChEBI" id="CHEBI:37563"/>
        <dbReference type="ChEBI" id="CHEBI:83071"/>
        <dbReference type="ChEBI" id="CHEBI:195187"/>
    </reaction>
    <physiologicalReaction direction="left-to-right" evidence="1">
        <dbReference type="Rhea" id="RHEA:76236"/>
    </physiologicalReaction>
</comment>
<comment type="cofactor">
    <cofactor evidence="1">
        <name>Mg(2+)</name>
        <dbReference type="ChEBI" id="CHEBI:18420"/>
    </cofactor>
    <text evidence="1">Magnesium is required for nucleotidyltransferase activity.</text>
</comment>
<comment type="cofactor">
    <cofactor evidence="1">
        <name>Ni(2+)</name>
        <dbReference type="ChEBI" id="CHEBI:49786"/>
    </cofactor>
    <text evidence="1">Nickel for phosphatase activity.</text>
</comment>
<comment type="subunit">
    <text evidence="1">Monomer. Can also form homodimers and oligomers.</text>
</comment>
<comment type="domain">
    <text evidence="1">Comprises two domains: an N-terminal domain containing the nucleotidyltransferase activity and a C-terminal HD domain associated with both phosphodiesterase and phosphatase activities.</text>
</comment>
<comment type="miscellaneous">
    <text evidence="1">A single active site specifically recognizes both ATP and CTP and is responsible for their addition.</text>
</comment>
<comment type="similarity">
    <text evidence="1">Belongs to the tRNA nucleotidyltransferase/poly(A) polymerase family. Bacterial CCA-adding enzyme type 1 subfamily.</text>
</comment>
<gene>
    <name evidence="1" type="primary">cca</name>
    <name type="ordered locus">SSPA2868</name>
</gene>
<accession>B5BG15</accession>
<protein>
    <recommendedName>
        <fullName evidence="1">Multifunctional CCA protein</fullName>
    </recommendedName>
    <domain>
        <recommendedName>
            <fullName evidence="1">CCA-adding enzyme</fullName>
            <ecNumber evidence="1">2.7.7.72</ecNumber>
        </recommendedName>
        <alternativeName>
            <fullName evidence="1">CCA tRNA nucleotidyltransferase</fullName>
        </alternativeName>
        <alternativeName>
            <fullName evidence="1">tRNA CCA-pyrophosphorylase</fullName>
        </alternativeName>
        <alternativeName>
            <fullName evidence="1">tRNA adenylyl-/cytidylyl-transferase</fullName>
        </alternativeName>
        <alternativeName>
            <fullName evidence="1">tRNA nucleotidyltransferase</fullName>
        </alternativeName>
        <alternativeName>
            <fullName evidence="1">tRNA-NT</fullName>
        </alternativeName>
    </domain>
    <domain>
        <recommendedName>
            <fullName evidence="1">2'-nucleotidase</fullName>
            <ecNumber evidence="1">3.1.3.-</ecNumber>
        </recommendedName>
    </domain>
    <domain>
        <recommendedName>
            <fullName evidence="1">2',3'-cyclic phosphodiesterase</fullName>
            <ecNumber evidence="1">3.1.4.-</ecNumber>
        </recommendedName>
    </domain>
    <domain>
        <recommendedName>
            <fullName evidence="1">Phosphatase</fullName>
            <ecNumber evidence="1">3.1.3.-</ecNumber>
        </recommendedName>
    </domain>
</protein>
<sequence length="413" mass="46606">MKIYLVGGAVRDALLGLPVKDKDWVVVGATPQEMLDAGYQQVGRDFPVFLHPQTHEEYALARTERKSGSGYTGFTCYTAPDVTLEADLQRRDLTINALARDDDGQIIDPYHGRRDLEARLLRHVSPAFGEDPLRVLRVARFAARYAHLSFRIADETLALMREMTAAGELEHLTPERVWKETENALTTRNPQVYFQVLRDCGALRVLFPEIDALFGVPAPAKWHPEIDTGVHTLMTLSMAAMLSPQLDVRFATLCHDLGKGLTPKNLWPRHHGHGPAGVKLVEQLCQRLRVPNDLRDLAKLVAEYHDLIHTFPILQPKTIVKLFDAIDAWRKPQRVEQIALTSEADVRGRTGFEASDYPQGRWLREAWQVAQAVPTKEVVEAGFKGIEIREELTKRRIAAVANWKEKRCPNPAS</sequence>
<keyword id="KW-0067">ATP-binding</keyword>
<keyword id="KW-0378">Hydrolase</keyword>
<keyword id="KW-0460">Magnesium</keyword>
<keyword id="KW-0479">Metal-binding</keyword>
<keyword id="KW-0511">Multifunctional enzyme</keyword>
<keyword id="KW-0533">Nickel</keyword>
<keyword id="KW-0547">Nucleotide-binding</keyword>
<keyword id="KW-0548">Nucleotidyltransferase</keyword>
<keyword id="KW-0692">RNA repair</keyword>
<keyword id="KW-0694">RNA-binding</keyword>
<keyword id="KW-0808">Transferase</keyword>
<keyword id="KW-0819">tRNA processing</keyword>
<feature type="chain" id="PRO_1000140051" description="Multifunctional CCA protein">
    <location>
        <begin position="1"/>
        <end position="413"/>
    </location>
</feature>
<feature type="domain" description="HD" evidence="1">
    <location>
        <begin position="228"/>
        <end position="329"/>
    </location>
</feature>
<feature type="binding site" evidence="1">
    <location>
        <position position="8"/>
    </location>
    <ligand>
        <name>ATP</name>
        <dbReference type="ChEBI" id="CHEBI:30616"/>
    </ligand>
</feature>
<feature type="binding site" evidence="1">
    <location>
        <position position="8"/>
    </location>
    <ligand>
        <name>CTP</name>
        <dbReference type="ChEBI" id="CHEBI:37563"/>
    </ligand>
</feature>
<feature type="binding site" evidence="1">
    <location>
        <position position="11"/>
    </location>
    <ligand>
        <name>ATP</name>
        <dbReference type="ChEBI" id="CHEBI:30616"/>
    </ligand>
</feature>
<feature type="binding site" evidence="1">
    <location>
        <position position="11"/>
    </location>
    <ligand>
        <name>CTP</name>
        <dbReference type="ChEBI" id="CHEBI:37563"/>
    </ligand>
</feature>
<feature type="binding site" evidence="1">
    <location>
        <position position="21"/>
    </location>
    <ligand>
        <name>Mg(2+)</name>
        <dbReference type="ChEBI" id="CHEBI:18420"/>
    </ligand>
</feature>
<feature type="binding site" evidence="1">
    <location>
        <position position="23"/>
    </location>
    <ligand>
        <name>Mg(2+)</name>
        <dbReference type="ChEBI" id="CHEBI:18420"/>
    </ligand>
</feature>
<feature type="binding site" evidence="1">
    <location>
        <position position="91"/>
    </location>
    <ligand>
        <name>ATP</name>
        <dbReference type="ChEBI" id="CHEBI:30616"/>
    </ligand>
</feature>
<feature type="binding site" evidence="1">
    <location>
        <position position="91"/>
    </location>
    <ligand>
        <name>CTP</name>
        <dbReference type="ChEBI" id="CHEBI:37563"/>
    </ligand>
</feature>
<feature type="binding site" evidence="1">
    <location>
        <position position="137"/>
    </location>
    <ligand>
        <name>ATP</name>
        <dbReference type="ChEBI" id="CHEBI:30616"/>
    </ligand>
</feature>
<feature type="binding site" evidence="1">
    <location>
        <position position="137"/>
    </location>
    <ligand>
        <name>CTP</name>
        <dbReference type="ChEBI" id="CHEBI:37563"/>
    </ligand>
</feature>
<feature type="binding site" evidence="1">
    <location>
        <position position="140"/>
    </location>
    <ligand>
        <name>ATP</name>
        <dbReference type="ChEBI" id="CHEBI:30616"/>
    </ligand>
</feature>
<feature type="binding site" evidence="1">
    <location>
        <position position="140"/>
    </location>
    <ligand>
        <name>CTP</name>
        <dbReference type="ChEBI" id="CHEBI:37563"/>
    </ligand>
</feature>
<name>CCA_SALPK</name>
<proteinExistence type="inferred from homology"/>